<protein>
    <recommendedName>
        <fullName evidence="1">Acetylglutamate kinase</fullName>
        <ecNumber evidence="1">2.7.2.8</ecNumber>
    </recommendedName>
    <alternativeName>
        <fullName evidence="1">N-acetyl-L-glutamate 5-phosphotransferase</fullName>
    </alternativeName>
    <alternativeName>
        <fullName evidence="1">NAG kinase</fullName>
        <shortName evidence="1">NAGK</shortName>
    </alternativeName>
</protein>
<reference key="1">
    <citation type="journal article" date="2008" name="J. Bacteriol.">
        <title>The complete genome sequence of Actinobacillus pleuropneumoniae L20 (serotype 5b).</title>
        <authorList>
            <person name="Foote S.J."/>
            <person name="Bosse J.T."/>
            <person name="Bouevitch A.B."/>
            <person name="Langford P.R."/>
            <person name="Young N.M."/>
            <person name="Nash J.H.E."/>
        </authorList>
    </citation>
    <scope>NUCLEOTIDE SEQUENCE [LARGE SCALE GENOMIC DNA]</scope>
    <source>
        <strain>L20</strain>
    </source>
</reference>
<accession>A3MYW5</accession>
<proteinExistence type="inferred from homology"/>
<sequence length="284" mass="30318">MLQNEVENFANLLEQATVYLAPYQEKIIVVKYGGNAMINEDRKKLVMQDILLLNQLGVKVVLVHGGGPEISQGVKLLGKEPQFINGLRVTDQDTINVVLQMLAGKVNKSLVALLKGKGVGLCGIDANMLQCEKLQAEVDYGFVGEIVKVNTQLLELALSANLIPVISTVGVDDQGVAYNINADTVASEIAMALGAAKLVSMTDIAGLLRDRFDESTLIPEVEVSEVQGLIDQGIIAGGMIPKIACCTDFINAGGIEANIIDGRVPHAILVSLFGGKNGTLFYKK</sequence>
<gene>
    <name evidence="1" type="primary">argB</name>
    <name type="ordered locus">APL_0243</name>
</gene>
<comment type="function">
    <text evidence="1">Catalyzes the ATP-dependent phosphorylation of N-acetyl-L-glutamate.</text>
</comment>
<comment type="catalytic activity">
    <reaction evidence="1">
        <text>N-acetyl-L-glutamate + ATP = N-acetyl-L-glutamyl 5-phosphate + ADP</text>
        <dbReference type="Rhea" id="RHEA:14629"/>
        <dbReference type="ChEBI" id="CHEBI:30616"/>
        <dbReference type="ChEBI" id="CHEBI:44337"/>
        <dbReference type="ChEBI" id="CHEBI:57936"/>
        <dbReference type="ChEBI" id="CHEBI:456216"/>
        <dbReference type="EC" id="2.7.2.8"/>
    </reaction>
</comment>
<comment type="pathway">
    <text evidence="1">Amino-acid biosynthesis; L-arginine biosynthesis; N(2)-acetyl-L-ornithine from L-glutamate: step 2/4.</text>
</comment>
<comment type="subcellular location">
    <subcellularLocation>
        <location evidence="1">Cytoplasm</location>
    </subcellularLocation>
</comment>
<comment type="similarity">
    <text evidence="1">Belongs to the acetylglutamate kinase family. ArgB subfamily.</text>
</comment>
<organism>
    <name type="scientific">Actinobacillus pleuropneumoniae serotype 5b (strain L20)</name>
    <dbReference type="NCBI Taxonomy" id="416269"/>
    <lineage>
        <taxon>Bacteria</taxon>
        <taxon>Pseudomonadati</taxon>
        <taxon>Pseudomonadota</taxon>
        <taxon>Gammaproteobacteria</taxon>
        <taxon>Pasteurellales</taxon>
        <taxon>Pasteurellaceae</taxon>
        <taxon>Actinobacillus</taxon>
    </lineage>
</organism>
<evidence type="ECO:0000255" key="1">
    <source>
        <dbReference type="HAMAP-Rule" id="MF_00082"/>
    </source>
</evidence>
<name>ARGB_ACTP2</name>
<dbReference type="EC" id="2.7.2.8" evidence="1"/>
<dbReference type="EMBL" id="CP000569">
    <property type="protein sequence ID" value="ABN73351.1"/>
    <property type="molecule type" value="Genomic_DNA"/>
</dbReference>
<dbReference type="RefSeq" id="WP_009875332.1">
    <property type="nucleotide sequence ID" value="NC_009053.1"/>
</dbReference>
<dbReference type="SMR" id="A3MYW5"/>
<dbReference type="STRING" id="416269.APL_0243"/>
<dbReference type="EnsemblBacteria" id="ABN73351">
    <property type="protein sequence ID" value="ABN73351"/>
    <property type="gene ID" value="APL_0243"/>
</dbReference>
<dbReference type="KEGG" id="apl:APL_0243"/>
<dbReference type="PATRIC" id="fig|416269.6.peg.248"/>
<dbReference type="eggNOG" id="COG0548">
    <property type="taxonomic scope" value="Bacteria"/>
</dbReference>
<dbReference type="HOGENOM" id="CLU_053680_0_0_6"/>
<dbReference type="UniPathway" id="UPA00068">
    <property type="reaction ID" value="UER00107"/>
</dbReference>
<dbReference type="Proteomes" id="UP000001432">
    <property type="component" value="Chromosome"/>
</dbReference>
<dbReference type="GO" id="GO:0005737">
    <property type="term" value="C:cytoplasm"/>
    <property type="evidence" value="ECO:0007669"/>
    <property type="project" value="UniProtKB-SubCell"/>
</dbReference>
<dbReference type="GO" id="GO:0003991">
    <property type="term" value="F:acetylglutamate kinase activity"/>
    <property type="evidence" value="ECO:0007669"/>
    <property type="project" value="UniProtKB-UniRule"/>
</dbReference>
<dbReference type="GO" id="GO:0005524">
    <property type="term" value="F:ATP binding"/>
    <property type="evidence" value="ECO:0007669"/>
    <property type="project" value="UniProtKB-UniRule"/>
</dbReference>
<dbReference type="GO" id="GO:0042450">
    <property type="term" value="P:arginine biosynthetic process via ornithine"/>
    <property type="evidence" value="ECO:0007669"/>
    <property type="project" value="UniProtKB-UniRule"/>
</dbReference>
<dbReference type="GO" id="GO:0006526">
    <property type="term" value="P:L-arginine biosynthetic process"/>
    <property type="evidence" value="ECO:0007669"/>
    <property type="project" value="UniProtKB-UniPathway"/>
</dbReference>
<dbReference type="CDD" id="cd04250">
    <property type="entry name" value="AAK_NAGK-C"/>
    <property type="match status" value="1"/>
</dbReference>
<dbReference type="FunFam" id="3.40.1160.10:FF:000004">
    <property type="entry name" value="Acetylglutamate kinase"/>
    <property type="match status" value="1"/>
</dbReference>
<dbReference type="Gene3D" id="3.40.1160.10">
    <property type="entry name" value="Acetylglutamate kinase-like"/>
    <property type="match status" value="1"/>
</dbReference>
<dbReference type="HAMAP" id="MF_00082">
    <property type="entry name" value="ArgB"/>
    <property type="match status" value="1"/>
</dbReference>
<dbReference type="InterPro" id="IPR036393">
    <property type="entry name" value="AceGlu_kinase-like_sf"/>
</dbReference>
<dbReference type="InterPro" id="IPR004662">
    <property type="entry name" value="AcgluKinase_fam"/>
</dbReference>
<dbReference type="InterPro" id="IPR037528">
    <property type="entry name" value="ArgB"/>
</dbReference>
<dbReference type="InterPro" id="IPR001048">
    <property type="entry name" value="Asp/Glu/Uridylate_kinase"/>
</dbReference>
<dbReference type="InterPro" id="IPR001057">
    <property type="entry name" value="Glu/AcGlu_kinase"/>
</dbReference>
<dbReference type="InterPro" id="IPR041727">
    <property type="entry name" value="NAGK-C"/>
</dbReference>
<dbReference type="NCBIfam" id="TIGR00761">
    <property type="entry name" value="argB"/>
    <property type="match status" value="1"/>
</dbReference>
<dbReference type="PANTHER" id="PTHR23342">
    <property type="entry name" value="N-ACETYLGLUTAMATE SYNTHASE"/>
    <property type="match status" value="1"/>
</dbReference>
<dbReference type="PANTHER" id="PTHR23342:SF0">
    <property type="entry name" value="N-ACETYLGLUTAMATE SYNTHASE, MITOCHONDRIAL"/>
    <property type="match status" value="1"/>
</dbReference>
<dbReference type="Pfam" id="PF00696">
    <property type="entry name" value="AA_kinase"/>
    <property type="match status" value="1"/>
</dbReference>
<dbReference type="PIRSF" id="PIRSF000728">
    <property type="entry name" value="NAGK"/>
    <property type="match status" value="1"/>
</dbReference>
<dbReference type="PRINTS" id="PR00474">
    <property type="entry name" value="GLU5KINASE"/>
</dbReference>
<dbReference type="SUPFAM" id="SSF53633">
    <property type="entry name" value="Carbamate kinase-like"/>
    <property type="match status" value="1"/>
</dbReference>
<feature type="chain" id="PRO_0000335605" description="Acetylglutamate kinase">
    <location>
        <begin position="1"/>
        <end position="284"/>
    </location>
</feature>
<feature type="binding site" evidence="1">
    <location>
        <begin position="66"/>
        <end position="67"/>
    </location>
    <ligand>
        <name>substrate</name>
    </ligand>
</feature>
<feature type="binding site" evidence="1">
    <location>
        <position position="88"/>
    </location>
    <ligand>
        <name>substrate</name>
    </ligand>
</feature>
<feature type="binding site" evidence="1">
    <location>
        <position position="179"/>
    </location>
    <ligand>
        <name>substrate</name>
    </ligand>
</feature>
<feature type="site" description="Transition state stabilizer" evidence="1">
    <location>
        <position position="31"/>
    </location>
</feature>
<feature type="site" description="Transition state stabilizer" evidence="1">
    <location>
        <position position="242"/>
    </location>
</feature>
<keyword id="KW-0028">Amino-acid biosynthesis</keyword>
<keyword id="KW-0055">Arginine biosynthesis</keyword>
<keyword id="KW-0067">ATP-binding</keyword>
<keyword id="KW-0963">Cytoplasm</keyword>
<keyword id="KW-0418">Kinase</keyword>
<keyword id="KW-0547">Nucleotide-binding</keyword>
<keyword id="KW-1185">Reference proteome</keyword>
<keyword id="KW-0808">Transferase</keyword>